<feature type="signal peptide" evidence="1">
    <location>
        <begin position="1"/>
        <end position="26"/>
    </location>
</feature>
<feature type="chain" id="PRO_1000147659" description="Tol-Pal system protein TolB" evidence="1">
    <location>
        <begin position="27"/>
        <end position="435"/>
    </location>
</feature>
<proteinExistence type="inferred from homology"/>
<comment type="function">
    <text evidence="1">Part of the Tol-Pal system, which plays a role in outer membrane invagination during cell division and is important for maintaining outer membrane integrity.</text>
</comment>
<comment type="subunit">
    <text evidence="1">The Tol-Pal system is composed of five core proteins: the inner membrane proteins TolA, TolQ and TolR, the periplasmic protein TolB and the outer membrane protein Pal. They form a network linking the inner and outer membranes and the peptidoglycan layer.</text>
</comment>
<comment type="subcellular location">
    <subcellularLocation>
        <location evidence="1">Periplasm</location>
    </subcellularLocation>
</comment>
<comment type="similarity">
    <text evidence="1">Belongs to the TolB family.</text>
</comment>
<evidence type="ECO:0000255" key="1">
    <source>
        <dbReference type="HAMAP-Rule" id="MF_00671"/>
    </source>
</evidence>
<reference key="1">
    <citation type="journal article" date="2009" name="J. Bacteriol.">
        <title>Genome sequences of three Agrobacterium biovars help elucidate the evolution of multichromosome genomes in bacteria.</title>
        <authorList>
            <person name="Slater S.C."/>
            <person name="Goldman B.S."/>
            <person name="Goodner B."/>
            <person name="Setubal J.C."/>
            <person name="Farrand S.K."/>
            <person name="Nester E.W."/>
            <person name="Burr T.J."/>
            <person name="Banta L."/>
            <person name="Dickerman A.W."/>
            <person name="Paulsen I."/>
            <person name="Otten L."/>
            <person name="Suen G."/>
            <person name="Welch R."/>
            <person name="Almeida N.F."/>
            <person name="Arnold F."/>
            <person name="Burton O.T."/>
            <person name="Du Z."/>
            <person name="Ewing A."/>
            <person name="Godsy E."/>
            <person name="Heisel S."/>
            <person name="Houmiel K.L."/>
            <person name="Jhaveri J."/>
            <person name="Lu J."/>
            <person name="Miller N.M."/>
            <person name="Norton S."/>
            <person name="Chen Q."/>
            <person name="Phoolcharoen W."/>
            <person name="Ohlin V."/>
            <person name="Ondrusek D."/>
            <person name="Pride N."/>
            <person name="Stricklin S.L."/>
            <person name="Sun J."/>
            <person name="Wheeler C."/>
            <person name="Wilson L."/>
            <person name="Zhu H."/>
            <person name="Wood D.W."/>
        </authorList>
    </citation>
    <scope>NUCLEOTIDE SEQUENCE [LARGE SCALE GENOMIC DNA]</scope>
    <source>
        <strain>ATCC BAA-846 / DSM 112012 / S4</strain>
    </source>
</reference>
<organism>
    <name type="scientific">Allorhizobium ampelinum (strain ATCC BAA-846 / DSM 112012 / S4)</name>
    <name type="common">Agrobacterium vitis (strain S4)</name>
    <dbReference type="NCBI Taxonomy" id="311402"/>
    <lineage>
        <taxon>Bacteria</taxon>
        <taxon>Pseudomonadati</taxon>
        <taxon>Pseudomonadota</taxon>
        <taxon>Alphaproteobacteria</taxon>
        <taxon>Hyphomicrobiales</taxon>
        <taxon>Rhizobiaceae</taxon>
        <taxon>Rhizobium/Agrobacterium group</taxon>
        <taxon>Allorhizobium</taxon>
        <taxon>Allorhizobium ampelinum</taxon>
    </lineage>
</organism>
<sequence>MKTFSLLRILIVLVGMAGAFATPAMALVEININKGNVEPMPIAIPDFLSANGIGAKISAVVEADLKRSGLFAPVNHGAFIDKQINPDQAPNMQNWTVLNAQALVVGRITQEGDGRLRAEFRLWDTYAGQQMSGQQFYTQPENWRRVAHIIADAIYERITGEKGYFDTRIVFVAESGTKTDRKRQLAIMDQDGENVRMLTNTANLVLTPRFSPNRQEVTYMSFEGNQPRVYLLQLETGQREVVGNFPGMTFSPRFSPDGQRVIMSLQQDANSNIYTMDLRSRTTTRLTSTAAIDTSPSYAPDGRRIVFESDRGGRQQLYVMNSDGSGQTRISFGEGSYSTPVWSPRGDLIAFTKQSGGKFSIGVMKPDGSGERLLTTGFHNEGPTWAPNGRVLMFFRQAAGSGGPQLYSIDLTGYNEQLVKTPSFASDPAWSPLLE</sequence>
<keyword id="KW-0131">Cell cycle</keyword>
<keyword id="KW-0132">Cell division</keyword>
<keyword id="KW-0574">Periplasm</keyword>
<keyword id="KW-1185">Reference proteome</keyword>
<keyword id="KW-0732">Signal</keyword>
<gene>
    <name evidence="1" type="primary">tolB</name>
    <name type="ordered locus">Avi_3621</name>
</gene>
<name>TOLB_ALLAM</name>
<protein>
    <recommendedName>
        <fullName evidence="1">Tol-Pal system protein TolB</fullName>
    </recommendedName>
</protein>
<dbReference type="EMBL" id="CP000633">
    <property type="protein sequence ID" value="ACM37608.1"/>
    <property type="molecule type" value="Genomic_DNA"/>
</dbReference>
<dbReference type="RefSeq" id="WP_015917021.1">
    <property type="nucleotide sequence ID" value="NC_011989.1"/>
</dbReference>
<dbReference type="SMR" id="B9JRY0"/>
<dbReference type="STRING" id="311402.Avi_3621"/>
<dbReference type="GeneID" id="60683159"/>
<dbReference type="KEGG" id="avi:Avi_3621"/>
<dbReference type="eggNOG" id="COG0823">
    <property type="taxonomic scope" value="Bacteria"/>
</dbReference>
<dbReference type="HOGENOM" id="CLU_047123_0_0_5"/>
<dbReference type="Proteomes" id="UP000001596">
    <property type="component" value="Chromosome 1"/>
</dbReference>
<dbReference type="GO" id="GO:0042597">
    <property type="term" value="C:periplasmic space"/>
    <property type="evidence" value="ECO:0007669"/>
    <property type="project" value="UniProtKB-SubCell"/>
</dbReference>
<dbReference type="GO" id="GO:0051301">
    <property type="term" value="P:cell division"/>
    <property type="evidence" value="ECO:0007669"/>
    <property type="project" value="UniProtKB-UniRule"/>
</dbReference>
<dbReference type="GO" id="GO:0017038">
    <property type="term" value="P:protein import"/>
    <property type="evidence" value="ECO:0007669"/>
    <property type="project" value="InterPro"/>
</dbReference>
<dbReference type="Gene3D" id="2.120.10.30">
    <property type="entry name" value="TolB, C-terminal domain"/>
    <property type="match status" value="1"/>
</dbReference>
<dbReference type="Gene3D" id="3.40.50.10070">
    <property type="entry name" value="TolB, N-terminal domain"/>
    <property type="match status" value="1"/>
</dbReference>
<dbReference type="HAMAP" id="MF_00671">
    <property type="entry name" value="TolB"/>
    <property type="match status" value="1"/>
</dbReference>
<dbReference type="InterPro" id="IPR011042">
    <property type="entry name" value="6-blade_b-propeller_TolB-like"/>
</dbReference>
<dbReference type="InterPro" id="IPR011659">
    <property type="entry name" value="PD40"/>
</dbReference>
<dbReference type="InterPro" id="IPR014167">
    <property type="entry name" value="Tol-Pal_TolB"/>
</dbReference>
<dbReference type="InterPro" id="IPR007195">
    <property type="entry name" value="TolB_N"/>
</dbReference>
<dbReference type="NCBIfam" id="TIGR02800">
    <property type="entry name" value="propeller_TolB"/>
    <property type="match status" value="1"/>
</dbReference>
<dbReference type="PANTHER" id="PTHR36842:SF1">
    <property type="entry name" value="PROTEIN TOLB"/>
    <property type="match status" value="1"/>
</dbReference>
<dbReference type="PANTHER" id="PTHR36842">
    <property type="entry name" value="PROTEIN TOLB HOMOLOG"/>
    <property type="match status" value="1"/>
</dbReference>
<dbReference type="Pfam" id="PF07676">
    <property type="entry name" value="PD40"/>
    <property type="match status" value="3"/>
</dbReference>
<dbReference type="Pfam" id="PF04052">
    <property type="entry name" value="TolB_N"/>
    <property type="match status" value="1"/>
</dbReference>
<dbReference type="SUPFAM" id="SSF52964">
    <property type="entry name" value="TolB, N-terminal domain"/>
    <property type="match status" value="1"/>
</dbReference>
<dbReference type="SUPFAM" id="SSF69304">
    <property type="entry name" value="Tricorn protease N-terminal domain"/>
    <property type="match status" value="1"/>
</dbReference>
<accession>B9JRY0</accession>